<name>Y1378_HYDS0</name>
<organism>
    <name type="scientific">Hydrogenobaculum sp. (strain Y04AAS1)</name>
    <dbReference type="NCBI Taxonomy" id="380749"/>
    <lineage>
        <taxon>Bacteria</taxon>
        <taxon>Pseudomonadati</taxon>
        <taxon>Aquificota</taxon>
        <taxon>Aquificia</taxon>
        <taxon>Aquificales</taxon>
        <taxon>Aquificaceae</taxon>
        <taxon>Hydrogenobaculum</taxon>
    </lineage>
</organism>
<protein>
    <recommendedName>
        <fullName evidence="1">UPF0235 protein HY04AAS1_1378</fullName>
    </recommendedName>
</protein>
<dbReference type="EMBL" id="CP001130">
    <property type="protein sequence ID" value="ACG58063.1"/>
    <property type="molecule type" value="Genomic_DNA"/>
</dbReference>
<dbReference type="RefSeq" id="WP_012514419.1">
    <property type="nucleotide sequence ID" value="NC_011126.1"/>
</dbReference>
<dbReference type="SMR" id="B4U5M3"/>
<dbReference type="STRING" id="380749.HY04AAS1_1378"/>
<dbReference type="KEGG" id="hya:HY04AAS1_1378"/>
<dbReference type="eggNOG" id="COG1872">
    <property type="taxonomic scope" value="Bacteria"/>
</dbReference>
<dbReference type="HOGENOM" id="CLU_130694_5_3_0"/>
<dbReference type="OrthoDB" id="3176309at2"/>
<dbReference type="GO" id="GO:0005737">
    <property type="term" value="C:cytoplasm"/>
    <property type="evidence" value="ECO:0007669"/>
    <property type="project" value="TreeGrafter"/>
</dbReference>
<dbReference type="Gene3D" id="3.30.1200.10">
    <property type="entry name" value="YggU-like"/>
    <property type="match status" value="1"/>
</dbReference>
<dbReference type="HAMAP" id="MF_00634">
    <property type="entry name" value="UPF0235"/>
    <property type="match status" value="1"/>
</dbReference>
<dbReference type="InterPro" id="IPR003746">
    <property type="entry name" value="DUF167"/>
</dbReference>
<dbReference type="InterPro" id="IPR036591">
    <property type="entry name" value="YggU-like_sf"/>
</dbReference>
<dbReference type="NCBIfam" id="TIGR00251">
    <property type="entry name" value="DUF167 family protein"/>
    <property type="match status" value="1"/>
</dbReference>
<dbReference type="PANTHER" id="PTHR13420">
    <property type="entry name" value="UPF0235 PROTEIN C15ORF40"/>
    <property type="match status" value="1"/>
</dbReference>
<dbReference type="PANTHER" id="PTHR13420:SF7">
    <property type="entry name" value="UPF0235 PROTEIN C15ORF40"/>
    <property type="match status" value="1"/>
</dbReference>
<dbReference type="Pfam" id="PF02594">
    <property type="entry name" value="DUF167"/>
    <property type="match status" value="1"/>
</dbReference>
<dbReference type="SMART" id="SM01152">
    <property type="entry name" value="DUF167"/>
    <property type="match status" value="1"/>
</dbReference>
<dbReference type="SUPFAM" id="SSF69786">
    <property type="entry name" value="YggU-like"/>
    <property type="match status" value="1"/>
</dbReference>
<feature type="chain" id="PRO_1000130690" description="UPF0235 protein HY04AAS1_1378">
    <location>
        <begin position="1"/>
        <end position="73"/>
    </location>
</feature>
<comment type="similarity">
    <text evidence="1">Belongs to the UPF0235 family.</text>
</comment>
<reference key="1">
    <citation type="journal article" date="2009" name="J. Bacteriol.">
        <title>Complete and draft genome sequences of six members of the Aquificales.</title>
        <authorList>
            <person name="Reysenbach A.-L."/>
            <person name="Hamamura N."/>
            <person name="Podar M."/>
            <person name="Griffiths E."/>
            <person name="Ferreira S."/>
            <person name="Hochstein R."/>
            <person name="Heidelberg J."/>
            <person name="Johnson J."/>
            <person name="Mead D."/>
            <person name="Pohorille A."/>
            <person name="Sarmiento M."/>
            <person name="Schweighofer K."/>
            <person name="Seshadri R."/>
            <person name="Voytek M.A."/>
        </authorList>
    </citation>
    <scope>NUCLEOTIDE SEQUENCE [LARGE SCALE GENOMIC DNA]</scope>
    <source>
        <strain>Y04AAS1</strain>
    </source>
</reference>
<accession>B4U5M3</accession>
<sequence length="73" mass="8166">MILRVKVKPNAKTVSVEQLEDKSLKISIKSPPVNGKANEELIKVLSEFLKVSKSKINIKAGKSSREKLVEIYD</sequence>
<gene>
    <name type="ordered locus">HY04AAS1_1378</name>
</gene>
<evidence type="ECO:0000255" key="1">
    <source>
        <dbReference type="HAMAP-Rule" id="MF_00634"/>
    </source>
</evidence>
<proteinExistence type="inferred from homology"/>